<accession>B3CRZ3</accession>
<gene>
    <name evidence="1" type="primary">dapE</name>
    <name type="ordered locus">OTT_0792</name>
</gene>
<feature type="chain" id="PRO_0000375638" description="Succinyl-diaminopimelate desuccinylase">
    <location>
        <begin position="1"/>
        <end position="388"/>
    </location>
</feature>
<feature type="active site" evidence="1">
    <location>
        <position position="74"/>
    </location>
</feature>
<feature type="active site" description="Proton acceptor" evidence="1">
    <location>
        <position position="139"/>
    </location>
</feature>
<feature type="binding site" evidence="1">
    <location>
        <position position="72"/>
    </location>
    <ligand>
        <name>Zn(2+)</name>
        <dbReference type="ChEBI" id="CHEBI:29105"/>
        <label>1</label>
    </ligand>
</feature>
<feature type="binding site" evidence="1">
    <location>
        <position position="105"/>
    </location>
    <ligand>
        <name>Zn(2+)</name>
        <dbReference type="ChEBI" id="CHEBI:29105"/>
        <label>1</label>
    </ligand>
</feature>
<feature type="binding site" evidence="1">
    <location>
        <position position="105"/>
    </location>
    <ligand>
        <name>Zn(2+)</name>
        <dbReference type="ChEBI" id="CHEBI:29105"/>
        <label>2</label>
    </ligand>
</feature>
<feature type="binding site" evidence="1">
    <location>
        <position position="140"/>
    </location>
    <ligand>
        <name>Zn(2+)</name>
        <dbReference type="ChEBI" id="CHEBI:29105"/>
        <label>2</label>
    </ligand>
</feature>
<feature type="binding site" evidence="1">
    <location>
        <position position="168"/>
    </location>
    <ligand>
        <name>Zn(2+)</name>
        <dbReference type="ChEBI" id="CHEBI:29105"/>
        <label>1</label>
    </ligand>
</feature>
<feature type="binding site" evidence="1">
    <location>
        <position position="353"/>
    </location>
    <ligand>
        <name>Zn(2+)</name>
        <dbReference type="ChEBI" id="CHEBI:29105"/>
        <label>2</label>
    </ligand>
</feature>
<comment type="function">
    <text evidence="1">Catalyzes the hydrolysis of N-succinyl-L,L-diaminopimelic acid (SDAP), forming succinate and LL-2,6-diaminopimelate (DAP), an intermediate involved in the bacterial biosynthesis of lysine and meso-diaminopimelic acid, an essential component of bacterial cell walls.</text>
</comment>
<comment type="catalytic activity">
    <reaction evidence="1">
        <text>N-succinyl-(2S,6S)-2,6-diaminopimelate + H2O = (2S,6S)-2,6-diaminopimelate + succinate</text>
        <dbReference type="Rhea" id="RHEA:22608"/>
        <dbReference type="ChEBI" id="CHEBI:15377"/>
        <dbReference type="ChEBI" id="CHEBI:30031"/>
        <dbReference type="ChEBI" id="CHEBI:57609"/>
        <dbReference type="ChEBI" id="CHEBI:58087"/>
        <dbReference type="EC" id="3.5.1.18"/>
    </reaction>
</comment>
<comment type="cofactor">
    <cofactor evidence="1">
        <name>Zn(2+)</name>
        <dbReference type="ChEBI" id="CHEBI:29105"/>
    </cofactor>
    <cofactor evidence="1">
        <name>Co(2+)</name>
        <dbReference type="ChEBI" id="CHEBI:48828"/>
    </cofactor>
    <text evidence="1">Binds 2 Zn(2+) or Co(2+) ions per subunit.</text>
</comment>
<comment type="pathway">
    <text evidence="1">Amino-acid biosynthesis; L-lysine biosynthesis via DAP pathway; LL-2,6-diaminopimelate from (S)-tetrahydrodipicolinate (succinylase route): step 3/3.</text>
</comment>
<comment type="subunit">
    <text evidence="1">Homodimer.</text>
</comment>
<comment type="similarity">
    <text evidence="1">Belongs to the peptidase M20A family. DapE subfamily.</text>
</comment>
<evidence type="ECO:0000255" key="1">
    <source>
        <dbReference type="HAMAP-Rule" id="MF_01690"/>
    </source>
</evidence>
<organism>
    <name type="scientific">Orientia tsutsugamushi (strain Ikeda)</name>
    <name type="common">Rickettsia tsutsugamushi</name>
    <dbReference type="NCBI Taxonomy" id="334380"/>
    <lineage>
        <taxon>Bacteria</taxon>
        <taxon>Pseudomonadati</taxon>
        <taxon>Pseudomonadota</taxon>
        <taxon>Alphaproteobacteria</taxon>
        <taxon>Rickettsiales</taxon>
        <taxon>Rickettsiaceae</taxon>
        <taxon>Rickettsieae</taxon>
        <taxon>Orientia</taxon>
    </lineage>
</organism>
<sequence length="388" mass="44016">MISKKLIIELLKQLISFKSVTPNDNGAIDFITNLLVKQGFKVYVKEFGQEYKVKNLYGYFGNGQPNICFAGHIDVVPAGFIEQWKYPPFCATQYKDKIYGRGVVDMKGAISAMLSAVFCFIDNNNDFNGTISFLITADEEGEALFGTKKMLEWINKQGHKIDFTILGEPTCTDKIGDTIKIGRRGSINFDLKVFGKQGHVAYPHLAINPNHLIVKILNSFIGSKIDEGNEFFAPSNLEVVSIDTNNNITNIIPEIAQSKFNIRFNDIHTNEQLLEIVKKNIEQFTTNYDLQSSCRSRPFLAKMSPYIFSFKELVHKVTKIKPEFSTSGGTSDAYFFKDYSPIVEFGLLNTMAHKINEYCLINDLQTLCRVYYNALCLFLMSNSKFRTN</sequence>
<name>DAPE_ORITI</name>
<keyword id="KW-0028">Amino-acid biosynthesis</keyword>
<keyword id="KW-0170">Cobalt</keyword>
<keyword id="KW-0220">Diaminopimelate biosynthesis</keyword>
<keyword id="KW-0378">Hydrolase</keyword>
<keyword id="KW-0457">Lysine biosynthesis</keyword>
<keyword id="KW-0479">Metal-binding</keyword>
<keyword id="KW-0862">Zinc</keyword>
<reference key="1">
    <citation type="journal article" date="2008" name="DNA Res.">
        <title>The whole-genome sequencing of the obligate intracellular bacterium Orientia tsutsugamushi revealed massive gene amplification during reductive genome evolution.</title>
        <authorList>
            <person name="Nakayama K."/>
            <person name="Yamashita A."/>
            <person name="Kurokawa K."/>
            <person name="Morimoto T."/>
            <person name="Ogawa M."/>
            <person name="Fukuhara M."/>
            <person name="Urakami H."/>
            <person name="Ohnishi M."/>
            <person name="Uchiyama I."/>
            <person name="Ogura Y."/>
            <person name="Ooka T."/>
            <person name="Oshima K."/>
            <person name="Tamura A."/>
            <person name="Hattori M."/>
            <person name="Hayashi T."/>
        </authorList>
    </citation>
    <scope>NUCLEOTIDE SEQUENCE [LARGE SCALE GENOMIC DNA]</scope>
    <source>
        <strain>Ikeda</strain>
    </source>
</reference>
<protein>
    <recommendedName>
        <fullName evidence="1">Succinyl-diaminopimelate desuccinylase</fullName>
        <shortName evidence="1">SDAP desuccinylase</shortName>
        <ecNumber evidence="1">3.5.1.18</ecNumber>
    </recommendedName>
    <alternativeName>
        <fullName evidence="1">N-succinyl-LL-2,6-diaminoheptanedioate amidohydrolase</fullName>
    </alternativeName>
</protein>
<proteinExistence type="inferred from homology"/>
<dbReference type="EC" id="3.5.1.18" evidence="1"/>
<dbReference type="EMBL" id="AP008981">
    <property type="protein sequence ID" value="BAG40250.1"/>
    <property type="molecule type" value="Genomic_DNA"/>
</dbReference>
<dbReference type="RefSeq" id="WP_012461403.1">
    <property type="nucleotide sequence ID" value="NC_010793.1"/>
</dbReference>
<dbReference type="SMR" id="B3CRZ3"/>
<dbReference type="KEGG" id="ott:OTT_0792"/>
<dbReference type="HOGENOM" id="CLU_021802_4_0_5"/>
<dbReference type="OrthoDB" id="9809784at2"/>
<dbReference type="UniPathway" id="UPA00034">
    <property type="reaction ID" value="UER00021"/>
</dbReference>
<dbReference type="Proteomes" id="UP000001033">
    <property type="component" value="Chromosome"/>
</dbReference>
<dbReference type="GO" id="GO:0008777">
    <property type="term" value="F:acetylornithine deacetylase activity"/>
    <property type="evidence" value="ECO:0007669"/>
    <property type="project" value="TreeGrafter"/>
</dbReference>
<dbReference type="GO" id="GO:0050897">
    <property type="term" value="F:cobalt ion binding"/>
    <property type="evidence" value="ECO:0007669"/>
    <property type="project" value="UniProtKB-UniRule"/>
</dbReference>
<dbReference type="GO" id="GO:0009014">
    <property type="term" value="F:succinyl-diaminopimelate desuccinylase activity"/>
    <property type="evidence" value="ECO:0007669"/>
    <property type="project" value="UniProtKB-UniRule"/>
</dbReference>
<dbReference type="GO" id="GO:0008270">
    <property type="term" value="F:zinc ion binding"/>
    <property type="evidence" value="ECO:0007669"/>
    <property type="project" value="UniProtKB-UniRule"/>
</dbReference>
<dbReference type="GO" id="GO:0019877">
    <property type="term" value="P:diaminopimelate biosynthetic process"/>
    <property type="evidence" value="ECO:0007669"/>
    <property type="project" value="UniProtKB-UniRule"/>
</dbReference>
<dbReference type="GO" id="GO:0006526">
    <property type="term" value="P:L-arginine biosynthetic process"/>
    <property type="evidence" value="ECO:0007669"/>
    <property type="project" value="TreeGrafter"/>
</dbReference>
<dbReference type="GO" id="GO:0009089">
    <property type="term" value="P:lysine biosynthetic process via diaminopimelate"/>
    <property type="evidence" value="ECO:0007669"/>
    <property type="project" value="UniProtKB-UniRule"/>
</dbReference>
<dbReference type="CDD" id="cd03891">
    <property type="entry name" value="M20_DapE_proteobac"/>
    <property type="match status" value="1"/>
</dbReference>
<dbReference type="Gene3D" id="3.30.70.360">
    <property type="match status" value="1"/>
</dbReference>
<dbReference type="Gene3D" id="3.40.630.10">
    <property type="entry name" value="Zn peptidases"/>
    <property type="match status" value="2"/>
</dbReference>
<dbReference type="HAMAP" id="MF_01690">
    <property type="entry name" value="DapE"/>
    <property type="match status" value="1"/>
</dbReference>
<dbReference type="InterPro" id="IPR036264">
    <property type="entry name" value="Bact_exopeptidase_dim_dom"/>
</dbReference>
<dbReference type="InterPro" id="IPR005941">
    <property type="entry name" value="DapE_proteobac"/>
</dbReference>
<dbReference type="InterPro" id="IPR002933">
    <property type="entry name" value="Peptidase_M20"/>
</dbReference>
<dbReference type="InterPro" id="IPR011650">
    <property type="entry name" value="Peptidase_M20_dimer"/>
</dbReference>
<dbReference type="InterPro" id="IPR050072">
    <property type="entry name" value="Peptidase_M20A"/>
</dbReference>
<dbReference type="NCBIfam" id="TIGR01246">
    <property type="entry name" value="dapE_proteo"/>
    <property type="match status" value="1"/>
</dbReference>
<dbReference type="NCBIfam" id="NF009557">
    <property type="entry name" value="PRK13009.1"/>
    <property type="match status" value="1"/>
</dbReference>
<dbReference type="PANTHER" id="PTHR43808">
    <property type="entry name" value="ACETYLORNITHINE DEACETYLASE"/>
    <property type="match status" value="1"/>
</dbReference>
<dbReference type="PANTHER" id="PTHR43808:SF31">
    <property type="entry name" value="N-ACETYL-L-CITRULLINE DEACETYLASE"/>
    <property type="match status" value="1"/>
</dbReference>
<dbReference type="Pfam" id="PF07687">
    <property type="entry name" value="M20_dimer"/>
    <property type="match status" value="1"/>
</dbReference>
<dbReference type="Pfam" id="PF01546">
    <property type="entry name" value="Peptidase_M20"/>
    <property type="match status" value="1"/>
</dbReference>
<dbReference type="SUPFAM" id="SSF55031">
    <property type="entry name" value="Bacterial exopeptidase dimerisation domain"/>
    <property type="match status" value="1"/>
</dbReference>
<dbReference type="SUPFAM" id="SSF53187">
    <property type="entry name" value="Zn-dependent exopeptidases"/>
    <property type="match status" value="1"/>
</dbReference>